<proteinExistence type="evidence at protein level"/>
<feature type="peptide" id="PRO_0000402820" description="Tachykinin-like peptide-X" evidence="2">
    <location>
        <begin position="1"/>
        <end position="13"/>
    </location>
</feature>
<feature type="modified residue" description="Pyrrolidone carboxylic acid" evidence="2">
    <location>
        <position position="1"/>
    </location>
</feature>
<feature type="modified residue" description="Methionine amide" evidence="2">
    <location>
        <position position="13"/>
    </location>
</feature>
<name>TLP10_PHONI</name>
<organism>
    <name type="scientific">Phoneutria nigriventer</name>
    <name type="common">Brazilian armed spider</name>
    <name type="synonym">Ctenus nigriventer</name>
    <dbReference type="NCBI Taxonomy" id="6918"/>
    <lineage>
        <taxon>Eukaryota</taxon>
        <taxon>Metazoa</taxon>
        <taxon>Ecdysozoa</taxon>
        <taxon>Arthropoda</taxon>
        <taxon>Chelicerata</taxon>
        <taxon>Arachnida</taxon>
        <taxon>Araneae</taxon>
        <taxon>Araneomorphae</taxon>
        <taxon>Entelegynae</taxon>
        <taxon>Lycosoidea</taxon>
        <taxon>Ctenidae</taxon>
        <taxon>Phoneutria</taxon>
    </lineage>
</organism>
<protein>
    <recommendedName>
        <fullName evidence="5">Tachykinin-like peptide-X</fullName>
    </recommendedName>
    <alternativeName>
        <fullName evidence="3">P.nigriventer tachykinin peptides X</fullName>
        <shortName evidence="3">PnTkP-X</shortName>
    </alternativeName>
    <alternativeName>
        <fullName evidence="4">U29-ctenitoxin-Pn1j</fullName>
        <shortName evidence="4">U29-CNTX-Pn1j</shortName>
    </alternativeName>
</protein>
<dbReference type="GO" id="GO:0005576">
    <property type="term" value="C:extracellular region"/>
    <property type="evidence" value="ECO:0000314"/>
    <property type="project" value="UniProtKB"/>
</dbReference>
<dbReference type="InterPro" id="IPR013055">
    <property type="entry name" value="Tachy_Neuro_lke_CS"/>
</dbReference>
<dbReference type="PROSITE" id="PS00267">
    <property type="entry name" value="TACHYKININ"/>
    <property type="match status" value="1"/>
</dbReference>
<keyword id="KW-0027">Amidation</keyword>
<keyword id="KW-0903">Direct protein sequencing</keyword>
<keyword id="KW-0873">Pyrrolidone carboxylic acid</keyword>
<keyword id="KW-0964">Secreted</keyword>
<comment type="subcellular location">
    <subcellularLocation>
        <location evidence="2">Secreted</location>
    </subcellularLocation>
</comment>
<comment type="tissue specificity">
    <text evidence="2">Expressed by the venom gland.</text>
</comment>
<comment type="mass spectrometry"/>
<comment type="similarity">
    <text evidence="1">Belongs to the tachykinin family.</text>
</comment>
<evidence type="ECO:0000255" key="1"/>
<evidence type="ECO:0000269" key="2">
    <source>
    </source>
</evidence>
<evidence type="ECO:0000303" key="3">
    <source>
    </source>
</evidence>
<evidence type="ECO:0000305" key="4"/>
<evidence type="ECO:0000305" key="5">
    <source>
    </source>
</evidence>
<reference evidence="4" key="1">
    <citation type="journal article" date="2005" name="Rapid Commun. Mass Spectrom.">
        <title>Electrospray ionization quadrupole time-of-flight and matrix-assisted laser desorption/ionization tandem time-of-flight mass spectrometric analyses to solve micro-heterogeneity in post-translationally modified peptides from Phoneutria nigriventer (Aranea, Ctenidae) venom.</title>
        <authorList>
            <person name="Pimenta A.M.C."/>
            <person name="Rates B."/>
            <person name="Bloch C. Jr."/>
            <person name="Gomes P.C."/>
            <person name="Santoro M.M."/>
            <person name="de Lima M.E."/>
            <person name="Richardson M."/>
            <person name="Cordeiro M.N."/>
        </authorList>
    </citation>
    <scope>PROTEIN SEQUENCE</scope>
    <scope>SUBCELLULAR LOCATION</scope>
    <scope>TISSUE SPECIFICITY</scope>
    <scope>MASS SPECTROMETRY</scope>
    <scope>PYROGLUTAMATE FORMATION AT GLN-1</scope>
    <scope>AMIDATION AT MET-13</scope>
    <source>
        <tissue evidence="2">Venom</tissue>
    </source>
</reference>
<accession>P86307</accession>
<sequence>QKKDKKDKFYGLM</sequence>